<organism>
    <name type="scientific">Homo sapiens</name>
    <name type="common">Human</name>
    <dbReference type="NCBI Taxonomy" id="9606"/>
    <lineage>
        <taxon>Eukaryota</taxon>
        <taxon>Metazoa</taxon>
        <taxon>Chordata</taxon>
        <taxon>Craniata</taxon>
        <taxon>Vertebrata</taxon>
        <taxon>Euteleostomi</taxon>
        <taxon>Mammalia</taxon>
        <taxon>Eutheria</taxon>
        <taxon>Euarchontoglires</taxon>
        <taxon>Primates</taxon>
        <taxon>Haplorrhini</taxon>
        <taxon>Catarrhini</taxon>
        <taxon>Hominidae</taxon>
        <taxon>Homo</taxon>
    </lineage>
</organism>
<keyword id="KW-0002">3D-structure</keyword>
<keyword id="KW-0029">Amino-acid transport</keyword>
<keyword id="KW-1003">Cell membrane</keyword>
<keyword id="KW-0199">Cystinuria</keyword>
<keyword id="KW-0225">Disease variant</keyword>
<keyword id="KW-1015">Disulfide bond</keyword>
<keyword id="KW-0472">Membrane</keyword>
<keyword id="KW-0597">Phosphoprotein</keyword>
<keyword id="KW-1267">Proteomics identification</keyword>
<keyword id="KW-1185">Reference proteome</keyword>
<keyword id="KW-0812">Transmembrane</keyword>
<keyword id="KW-1133">Transmembrane helix</keyword>
<keyword id="KW-0813">Transport</keyword>
<reference key="1">
    <citation type="journal article" date="1999" name="Nat. Genet.">
        <title>Non-type I cystinuria caused by mutations in SLC7A9, encoding a subunit (b0,+AT) of rBAT.</title>
        <authorList>
            <person name="Feliubadalo L."/>
            <person name="Font M."/>
            <person name="Purroy J."/>
            <person name="Rousaud F."/>
            <person name="Estivill X."/>
            <person name="Nunes V."/>
            <person name="Golomb E."/>
            <person name="Centola M."/>
            <person name="Aksentijevich I."/>
            <person name="Kreiss Y."/>
            <person name="Goldman B."/>
            <person name="Pras M."/>
            <person name="Kastner D.L."/>
            <person name="Pras E."/>
            <person name="Gasparini P."/>
            <person name="Bisceglia L."/>
            <person name="Beccia E."/>
            <person name="Gallucci M."/>
            <person name="De Sanctis L."/>
            <person name="Ponzone A."/>
            <person name="Rizzoni G.F."/>
            <person name="Zelante L."/>
            <person name="Bassi M.T."/>
            <person name="George A.L. Jr."/>
            <person name="Manzoni M."/>
            <person name="De Grandi A."/>
            <person name="Riboni M."/>
            <person name="Endsley J.K."/>
            <person name="Ballabio A."/>
            <person name="Borsani G."/>
            <person name="Reig N."/>
            <person name="Fernandez E."/>
            <person name="Estevez R."/>
            <person name="Pineda M."/>
            <person name="Torrents D."/>
            <person name="Camps M."/>
            <person name="Lloberas J."/>
            <person name="Zorzano A."/>
            <person name="Palacin M."/>
        </authorList>
    </citation>
    <scope>NUCLEOTIDE SEQUENCE [MRNA]</scope>
    <scope>VARIANTS CSNU ARG-105; MET-170; THR-182; ARG-195 AND ARG-259</scope>
    <scope>CHARACTERIZATION OF VARIANT CSNU MET-170</scope>
    <scope>FUNCTION</scope>
    <scope>TISSUE SPECIFICITY</scope>
    <source>
        <tissue>Kidney</tissue>
    </source>
</reference>
<reference key="2">
    <citation type="journal article" date="1999" name="Mol. Biol. Cell">
        <title>Luminal heterodimeric amino acid transporter defective in cystinuria.</title>
        <authorList>
            <person name="Pfeiffer R."/>
            <person name="Loffing J."/>
            <person name="Rossier G."/>
            <person name="Bauch C."/>
            <person name="Meier C."/>
            <person name="Eggermann T."/>
            <person name="Loffing-Cueni D."/>
            <person name="Kuehn L.C."/>
            <person name="Verrey F."/>
        </authorList>
    </citation>
    <scope>NUCLEOTIDE SEQUENCE [MRNA]</scope>
    <scope>FUNCTION</scope>
    <source>
        <tissue>Kidney</tissue>
    </source>
</reference>
<reference key="3">
    <citation type="journal article" date="2001" name="Kidney Int.">
        <title>Human cystinuria-related transporter: localization and functional characterization.</title>
        <authorList>
            <person name="Mizoguchi K."/>
            <person name="Cha S.H."/>
            <person name="Chairoungdua A."/>
            <person name="Kim J.Y."/>
            <person name="Shigeta Y."/>
            <person name="Matsuo H."/>
            <person name="Fukushima J."/>
            <person name="Awa Y."/>
            <person name="Akakura K."/>
            <person name="Goya T."/>
            <person name="Ito H."/>
            <person name="Endou H."/>
            <person name="Kanai Y."/>
        </authorList>
    </citation>
    <scope>NUCLEOTIDE SEQUENCE [MRNA]</scope>
    <source>
        <tissue>Kidney</tissue>
    </source>
</reference>
<reference key="4">
    <citation type="journal article" date="2002" name="Kidney Int.">
        <title>SLC7A9 mutations in all three cystinuria subtypes.</title>
        <authorList>
            <person name="Leclerc D."/>
            <person name="Boutros M."/>
            <person name="Suh D."/>
            <person name="Wu Q."/>
            <person name="Palacin M."/>
            <person name="Ellis J.R."/>
            <person name="Goodyer P."/>
            <person name="Rozen R."/>
        </authorList>
    </citation>
    <scope>NUCLEOTIDE SEQUENCE [GENOMIC DNA]</scope>
    <scope>VARIANTS CSNU THR-44; LEU-261 AND THR-354</scope>
    <scope>VARIANT MET-223</scope>
</reference>
<reference key="5">
    <citation type="journal article" date="2004" name="Nat. Genet.">
        <title>Complete sequencing and characterization of 21,243 full-length human cDNAs.</title>
        <authorList>
            <person name="Ota T."/>
            <person name="Suzuki Y."/>
            <person name="Nishikawa T."/>
            <person name="Otsuki T."/>
            <person name="Sugiyama T."/>
            <person name="Irie R."/>
            <person name="Wakamatsu A."/>
            <person name="Hayashi K."/>
            <person name="Sato H."/>
            <person name="Nagai K."/>
            <person name="Kimura K."/>
            <person name="Makita H."/>
            <person name="Sekine M."/>
            <person name="Obayashi M."/>
            <person name="Nishi T."/>
            <person name="Shibahara T."/>
            <person name="Tanaka T."/>
            <person name="Ishii S."/>
            <person name="Yamamoto J."/>
            <person name="Saito K."/>
            <person name="Kawai Y."/>
            <person name="Isono Y."/>
            <person name="Nakamura Y."/>
            <person name="Nagahari K."/>
            <person name="Murakami K."/>
            <person name="Yasuda T."/>
            <person name="Iwayanagi T."/>
            <person name="Wagatsuma M."/>
            <person name="Shiratori A."/>
            <person name="Sudo H."/>
            <person name="Hosoiri T."/>
            <person name="Kaku Y."/>
            <person name="Kodaira H."/>
            <person name="Kondo H."/>
            <person name="Sugawara M."/>
            <person name="Takahashi M."/>
            <person name="Kanda K."/>
            <person name="Yokoi T."/>
            <person name="Furuya T."/>
            <person name="Kikkawa E."/>
            <person name="Omura Y."/>
            <person name="Abe K."/>
            <person name="Kamihara K."/>
            <person name="Katsuta N."/>
            <person name="Sato K."/>
            <person name="Tanikawa M."/>
            <person name="Yamazaki M."/>
            <person name="Ninomiya K."/>
            <person name="Ishibashi T."/>
            <person name="Yamashita H."/>
            <person name="Murakawa K."/>
            <person name="Fujimori K."/>
            <person name="Tanai H."/>
            <person name="Kimata M."/>
            <person name="Watanabe M."/>
            <person name="Hiraoka S."/>
            <person name="Chiba Y."/>
            <person name="Ishida S."/>
            <person name="Ono Y."/>
            <person name="Takiguchi S."/>
            <person name="Watanabe S."/>
            <person name="Yosida M."/>
            <person name="Hotuta T."/>
            <person name="Kusano J."/>
            <person name="Kanehori K."/>
            <person name="Takahashi-Fujii A."/>
            <person name="Hara H."/>
            <person name="Tanase T.-O."/>
            <person name="Nomura Y."/>
            <person name="Togiya S."/>
            <person name="Komai F."/>
            <person name="Hara R."/>
            <person name="Takeuchi K."/>
            <person name="Arita M."/>
            <person name="Imose N."/>
            <person name="Musashino K."/>
            <person name="Yuuki H."/>
            <person name="Oshima A."/>
            <person name="Sasaki N."/>
            <person name="Aotsuka S."/>
            <person name="Yoshikawa Y."/>
            <person name="Matsunawa H."/>
            <person name="Ichihara T."/>
            <person name="Shiohata N."/>
            <person name="Sano S."/>
            <person name="Moriya S."/>
            <person name="Momiyama H."/>
            <person name="Satoh N."/>
            <person name="Takami S."/>
            <person name="Terashima Y."/>
            <person name="Suzuki O."/>
            <person name="Nakagawa S."/>
            <person name="Senoh A."/>
            <person name="Mizoguchi H."/>
            <person name="Goto Y."/>
            <person name="Shimizu F."/>
            <person name="Wakebe H."/>
            <person name="Hishigaki H."/>
            <person name="Watanabe T."/>
            <person name="Sugiyama A."/>
            <person name="Takemoto M."/>
            <person name="Kawakami B."/>
            <person name="Yamazaki M."/>
            <person name="Watanabe K."/>
            <person name="Kumagai A."/>
            <person name="Itakura S."/>
            <person name="Fukuzumi Y."/>
            <person name="Fujimori Y."/>
            <person name="Komiyama M."/>
            <person name="Tashiro H."/>
            <person name="Tanigami A."/>
            <person name="Fujiwara T."/>
            <person name="Ono T."/>
            <person name="Yamada K."/>
            <person name="Fujii Y."/>
            <person name="Ozaki K."/>
            <person name="Hirao M."/>
            <person name="Ohmori Y."/>
            <person name="Kawabata A."/>
            <person name="Hikiji T."/>
            <person name="Kobatake N."/>
            <person name="Inagaki H."/>
            <person name="Ikema Y."/>
            <person name="Okamoto S."/>
            <person name="Okitani R."/>
            <person name="Kawakami T."/>
            <person name="Noguchi S."/>
            <person name="Itoh T."/>
            <person name="Shigeta K."/>
            <person name="Senba T."/>
            <person name="Matsumura K."/>
            <person name="Nakajima Y."/>
            <person name="Mizuno T."/>
            <person name="Morinaga M."/>
            <person name="Sasaki M."/>
            <person name="Togashi T."/>
            <person name="Oyama M."/>
            <person name="Hata H."/>
            <person name="Watanabe M."/>
            <person name="Komatsu T."/>
            <person name="Mizushima-Sugano J."/>
            <person name="Satoh T."/>
            <person name="Shirai Y."/>
            <person name="Takahashi Y."/>
            <person name="Nakagawa K."/>
            <person name="Okumura K."/>
            <person name="Nagase T."/>
            <person name="Nomura N."/>
            <person name="Kikuchi H."/>
            <person name="Masuho Y."/>
            <person name="Yamashita R."/>
            <person name="Nakai K."/>
            <person name="Yada T."/>
            <person name="Nakamura Y."/>
            <person name="Ohara O."/>
            <person name="Isogai T."/>
            <person name="Sugano S."/>
        </authorList>
    </citation>
    <scope>NUCLEOTIDE SEQUENCE [LARGE SCALE MRNA]</scope>
    <source>
        <tissue>Kidney</tissue>
    </source>
</reference>
<reference key="6">
    <citation type="journal article" date="2004" name="Genome Res.">
        <title>The status, quality, and expansion of the NIH full-length cDNA project: the Mammalian Gene Collection (MGC).</title>
        <authorList>
            <consortium name="The MGC Project Team"/>
        </authorList>
    </citation>
    <scope>NUCLEOTIDE SEQUENCE [LARGE SCALE MRNA]</scope>
    <source>
        <tissue>Kidney</tissue>
    </source>
</reference>
<reference key="7">
    <citation type="journal article" date="1996" name="J. Biol. Chem.">
        <title>Obligatory amino acid exchange via systems bo,+-like and y+L-like. A tertiary active transport mechanism for renal reabsorption of cystine and dibasic amino acids.</title>
        <authorList>
            <person name="Chillaron J."/>
            <person name="Estevez R."/>
            <person name="Mora C."/>
            <person name="Wagner C.A."/>
            <person name="Suessbrich H."/>
            <person name="Lang F."/>
            <person name="Gelpi J.L."/>
            <person name="Testar X."/>
            <person name="Busch A.E."/>
            <person name="Zorzano A."/>
            <person name="Palacin M."/>
        </authorList>
    </citation>
    <scope>FUNCTION</scope>
    <scope>TRANSPORT ACTIVITY</scope>
    <scope>BIOPHYSICOCHEMICAL PROPERTIES</scope>
</reference>
<reference key="8">
    <citation type="journal article" date="2002" name="Am. J. Physiol.">
        <title>rBAT-b(0,+)AT heterodimer is the main apical reabsorption system for cystine in the kidney.</title>
        <authorList>
            <person name="Fernandez E."/>
            <person name="Carrascal M."/>
            <person name="Rousaud F."/>
            <person name="Abian J."/>
            <person name="Zorzano A."/>
            <person name="Palacin M."/>
            <person name="Chillaron J."/>
        </authorList>
    </citation>
    <scope>SUBUNIT</scope>
    <scope>SUBCELLULAR LOCATION</scope>
    <scope>TISSUE SPECIFICITY</scope>
</reference>
<reference key="9">
    <citation type="journal article" date="2006" name="J. Biol. Chem.">
        <title>The structural and functional units of heteromeric amino acid transporters. The heavy subunit rBAT dictates oligomerization of the heteromeric amino acid transporters.</title>
        <authorList>
            <person name="Fernandez E."/>
            <person name="Jimenez-Vidal M."/>
            <person name="Calvo M."/>
            <person name="Zorzano A."/>
            <person name="Tebar F."/>
            <person name="Palacin M."/>
            <person name="Chillaron J."/>
        </authorList>
    </citation>
    <scope>FUNCTION</scope>
    <scope>TRANSPORT ACTIVITY</scope>
    <scope>SUBUNIT</scope>
    <scope>SUBCELLULAR LOCATION</scope>
    <scope>MUTAGENESIS OF CYS-321</scope>
</reference>
<reference key="10">
    <citation type="journal article" date="2020" name="Proc. Natl. Acad. Sci. U.S.A.">
        <title>Structural basis for amino acid exchange by a human heteromeric amino acid transporter.</title>
        <authorList>
            <person name="Wu D."/>
            <person name="Grund T.N."/>
            <person name="Welsch S."/>
            <person name="Mills D.J."/>
            <person name="Michel M."/>
            <person name="Safarian S."/>
            <person name="Michel H."/>
        </authorList>
    </citation>
    <scope>STRUCTURE BY ELECTRON MICROSCOPY (2.90 ANGSTROMS) IN COMPLEX WITH SLC3A1</scope>
    <scope>FUNCTION</scope>
    <scope>SUBUNIT</scope>
    <scope>SUBCELLULAR LOCATION</scope>
</reference>
<reference key="11">
    <citation type="journal article" date="2020" name="Sci. Adv.">
        <title>Cryo-EM structure of the human heteromeric amino acid transporter b0,+AT-rBAT.</title>
        <authorList>
            <person name="Yan R."/>
            <person name="Li Y."/>
            <person name="Shi Y."/>
            <person name="Zhou J."/>
            <person name="Lei J."/>
            <person name="Huang J."/>
            <person name="Zhou Q."/>
        </authorList>
    </citation>
    <scope>STRUCTURE BY ELECTRON MICROSCOPY (2.30 ANGSTROMS) OF 2-487 IN COMPLEX WITH SLC3A1 AND L-ARGININE</scope>
    <scope>DISULFIDE BOND</scope>
    <scope>TOPOLOGY</scope>
    <scope>FUNCTION</scope>
    <scope>SUBUNIT</scope>
    <scope>MUTAGENESIS OF TRP-230; ASP-233; TRP-235; GLN-237; SER-379; TRP-383 AND TYR-386</scope>
    <scope>CHARACTERIZATION OF VARIANTS CSNU LEU-52; VAL-70; MET-123; MET-170; THR-182; ARG-230; ARG-259; TRP-333; THR-354; THR-382 AND LEU-482</scope>
</reference>
<reference key="12">
    <citation type="journal article" date="2001" name="Hum. Mol. Genet.">
        <title>Functional analysis of mutations in SLC7A9, and genotype-phenotype correlation in non-type I cystinuria.</title>
        <authorList>
            <person name="Font M."/>
            <person name="Feliubadalo L."/>
            <person name="Estivill X."/>
            <person name="Nunes V."/>
            <person name="Golomb E."/>
            <person name="Kreiss Y."/>
            <person name="Pras E."/>
            <person name="Bisceglia L."/>
            <person name="d'Adamo A.P."/>
            <person name="Zelante L."/>
            <person name="Gasparini P."/>
            <person name="Bassi M.T."/>
            <person name="George A.L. Jr."/>
            <person name="Manzoni M."/>
            <person name="Riboni M."/>
            <person name="Ballabio A."/>
            <person name="Borsani G."/>
            <person name="Reig N."/>
            <person name="Fernandez E."/>
            <person name="Zorzano A."/>
            <person name="Bertran J."/>
            <person name="Palacin M."/>
        </authorList>
    </citation>
    <scope>VARIANTS CSNU ARG-10 DEL; LEU-52; ARG-63; LEU-69; VAL-70; ARG-105; MET-123; THR-126; ALA-158 INS; MET-170; THR-182; PHE-187; ILE-193 INS; ARG-195; ARG-230; THR-241; GLU-244 DEL; ARG-259; TRP-333; THR-354; ARG-379 AND THR-382</scope>
    <scope>CHARACTERIZATION OF VARIANTS CSNU VAL-70; ARG-105; MET-170; THR-182; TRP-333 AND THR-354</scope>
</reference>
<reference key="13">
    <citation type="journal article" date="2002" name="Kidney Int.">
        <title>Cystinuria in children: distribution and frequencies of mutations in the SLC3A1 and SLC7A9 genes.</title>
        <authorList>
            <person name="Botzenhart E."/>
            <person name="Vester U."/>
            <person name="Schmidt C."/>
            <person name="Hesse A."/>
            <person name="Halber M."/>
            <person name="Wagner C."/>
            <person name="Lang F."/>
            <person name="Hoyer P."/>
            <person name="Zerres K."/>
            <person name="Eggermann T."/>
        </authorList>
    </citation>
    <scope>VARIANTS CSNU ARG-105; VAL-224 AND VAL-331</scope>
</reference>
<reference key="14">
    <citation type="journal article" date="2003" name="Genet. Test.">
        <title>Mutation analysis of SLC7A9 in cystinuria patients in Sweden.</title>
        <authorList>
            <person name="Harnevik L."/>
            <person name="Fjellstedt E."/>
            <person name="Molbaek A."/>
            <person name="Denneberg T."/>
            <person name="Soderkvist P."/>
        </authorList>
    </citation>
    <scope>VARIANTS CSNU THR-182; LEU-261 AND MET-330</scope>
</reference>
<reference key="15">
    <citation type="journal article" date="2005" name="Ann. Hum. Genet.">
        <title>Molecular genetic analysis of SLC3A1 and SLC7A9 genes in Czech and Slovak cystinuric patients.</title>
        <authorList>
            <person name="Skopkova Z."/>
            <person name="Hrabincova E."/>
            <person name="Stastna S."/>
            <person name="Kozak L."/>
            <person name="Adam T."/>
        </authorList>
    </citation>
    <scope>VARIANTS CSNU ARG-105; MET-123; ARG-319 AND TRP-333</scope>
</reference>
<reference key="16">
    <citation type="journal article" date="2005" name="J. Med. Genet.">
        <title>New insights into cystinuria: 40 new mutations, genotype-phenotype correlation, and digenic inheritance causing partial phenotype.</title>
        <authorList>
            <person name="Font-Llitjos M."/>
            <person name="Jimenez-Vidal M."/>
            <person name="Bisceglia L."/>
            <person name="Di Perna M."/>
            <person name="de Sanctis L."/>
            <person name="Rousaud F."/>
            <person name="Zelante L."/>
            <person name="Palacin M."/>
            <person name="Nunes V."/>
        </authorList>
    </citation>
    <scope>VARIANTS CSNU MET-62; MET-188; CYS-232; PHE-283 AND VAL-316</scope>
</reference>
<reference key="17">
    <citation type="journal article" date="2006" name="Kidney Int.">
        <title>A novel missense mutation of SLC7A9 frequent in Japanese cystinuria cases affecting the C-terminus of the transporter.</title>
        <authorList>
            <person name="Shigeta Y."/>
            <person name="Kanai Y."/>
            <person name="Chairoungdua A."/>
            <person name="Ahmed N."/>
            <person name="Sakamoto S."/>
            <person name="Matsuo H."/>
            <person name="Kim D.K."/>
            <person name="Fujimura M."/>
            <person name="Anzai N."/>
            <person name="Mizoguchi K."/>
            <person name="Ueda T."/>
            <person name="Akakura K."/>
            <person name="Ichikawa T."/>
            <person name="Ito H."/>
            <person name="Endou H."/>
        </authorList>
    </citation>
    <scope>VARIANTS CSNU ARG-195; ASP-227; GLN-333 AND LEU-482</scope>
    <scope>CHARACTERIZATION OF VARIANTS CSNU ARG-195; ASP-227; GLN-333 AND LEU-482</scope>
    <scope>VARIANTS ALA-142 AND MET-223</scope>
    <scope>CHARACTERIZATION OF VARIANTS ALA-142 AND MET-223</scope>
    <scope>FUNCTION</scope>
    <scope>SUBCELLULAR LOCATION</scope>
    <scope>MUTAGENESIS OF PRO-482</scope>
</reference>
<reference key="18">
    <citation type="journal article" date="2008" name="Genet. Test.">
        <title>Twenty-four novel mutations identified in a cohort of 85 patients by direct sequencing of the SLC3A1 and SLC7A9 cystinuria genes.</title>
        <authorList>
            <person name="Di Perna M."/>
            <person name="Louizou E."/>
            <person name="Fischetti L."/>
            <person name="Dedoussis G.V."/>
            <person name="Stanziale P."/>
            <person name="Michelakakis H."/>
            <person name="Zelante L."/>
            <person name="Pras E."/>
            <person name="Bisceglia L."/>
        </authorList>
    </citation>
    <scope>VARIANTS CSNU MET-40; PHE-51; HIS-99; ARG-114; LEU-120; PHE-286; GLU-324; GLU-401 AND PRO-426</scope>
</reference>
<reference key="19">
    <citation type="journal article" date="2010" name="Mol. Genet. Metab.">
        <title>Large rearrangements detected by MLPA, point mutations, and survey of the frequency of mutations within the SLC3A1 and SLC7A9 genes in a cohort of 172 cystinuric Italian patients.</title>
        <authorList>
            <person name="Bisceglia L."/>
            <person name="Fischetti L."/>
            <person name="Bonis P.D."/>
            <person name="Palumbo O."/>
            <person name="Augello B."/>
            <person name="Stanziale P."/>
            <person name="Carella M."/>
            <person name="Zelante L."/>
        </authorList>
    </citation>
    <scope>VARIANTS CSNU ARG-105; GLU-105; MET-123; THR-182 AND LYS-250</scope>
</reference>
<comment type="function">
    <text evidence="4 5 13 14 17 18 19">Associates with SLC3A1 to form a functional transporter complex that mediates the electrogenic exchange between cationic amino acids and neutral amino acids, with a stoichiometry of 1:1 (PubMed:16825196, PubMed:32494597, PubMed:32817565, PubMed:8663357). Has system b(0,+)-like activity with high affinity for extracellular cationic amino acids and L-cystine and lower affinity for intracellular neutral amino acids (PubMed:16825196, PubMed:32494597, PubMed:8663357). Substrate exchange is driven by high concentration of intracellular neutral amino acids and the intracellular reduction of L-cystine to L-cysteine (PubMed:8663357). Required for reabsorption of L-cystine and dibasic amino acids across the brush border membrane in renal proximal tubules.</text>
</comment>
<comment type="catalytic activity">
    <reaction evidence="14 19">
        <text>L-leucine(out) + L-arginine(in) = L-leucine(in) + L-arginine(out)</text>
        <dbReference type="Rhea" id="RHEA:71059"/>
        <dbReference type="ChEBI" id="CHEBI:32682"/>
        <dbReference type="ChEBI" id="CHEBI:57427"/>
    </reaction>
    <physiologicalReaction direction="left-to-right" evidence="23 24">
        <dbReference type="Rhea" id="RHEA:71060"/>
    </physiologicalReaction>
</comment>
<comment type="catalytic activity">
    <reaction evidence="19">
        <text>L-histidine(out) + L-arginine(in) = L-histidine(in) + L-arginine(out)</text>
        <dbReference type="Rhea" id="RHEA:71063"/>
        <dbReference type="ChEBI" id="CHEBI:32682"/>
        <dbReference type="ChEBI" id="CHEBI:57595"/>
    </reaction>
    <physiologicalReaction direction="left-to-right" evidence="24">
        <dbReference type="Rhea" id="RHEA:71064"/>
    </physiologicalReaction>
</comment>
<comment type="catalytic activity">
    <reaction evidence="19">
        <text>L-arginine(in) + L-phenylalanine(out) = L-arginine(out) + L-phenylalanine(in)</text>
        <dbReference type="Rhea" id="RHEA:71067"/>
        <dbReference type="ChEBI" id="CHEBI:32682"/>
        <dbReference type="ChEBI" id="CHEBI:58095"/>
    </reaction>
    <physiologicalReaction direction="left-to-right" evidence="24">
        <dbReference type="Rhea" id="RHEA:71068"/>
    </physiologicalReaction>
</comment>
<comment type="catalytic activity">
    <reaction evidence="19">
        <text>L-cysteine(out) + L-arginine(in) = L-cysteine(in) + L-arginine(out)</text>
        <dbReference type="Rhea" id="RHEA:71071"/>
        <dbReference type="ChEBI" id="CHEBI:32682"/>
        <dbReference type="ChEBI" id="CHEBI:35235"/>
    </reaction>
    <physiologicalReaction direction="left-to-right" evidence="24">
        <dbReference type="Rhea" id="RHEA:71072"/>
    </physiologicalReaction>
</comment>
<comment type="catalytic activity">
    <reaction evidence="19">
        <text>L-cystine(out) + L-arginine(in) = L-cystine(in) + L-arginine(out)</text>
        <dbReference type="Rhea" id="RHEA:71075"/>
        <dbReference type="ChEBI" id="CHEBI:32682"/>
        <dbReference type="ChEBI" id="CHEBI:35491"/>
    </reaction>
    <physiologicalReaction direction="left-to-right" evidence="24">
        <dbReference type="Rhea" id="RHEA:71076"/>
    </physiologicalReaction>
</comment>
<comment type="catalytic activity">
    <reaction evidence="19">
        <text>L-lysine(out) + L-arginine(in) = L-lysine(in) + L-arginine(out)</text>
        <dbReference type="Rhea" id="RHEA:70827"/>
        <dbReference type="ChEBI" id="CHEBI:32551"/>
        <dbReference type="ChEBI" id="CHEBI:32682"/>
    </reaction>
    <physiologicalReaction direction="left-to-right" evidence="24">
        <dbReference type="Rhea" id="RHEA:70828"/>
    </physiologicalReaction>
</comment>
<comment type="biophysicochemical properties">
    <kinetics>
        <KM evidence="19">41 uM for L-cystine</KM>
        <KM evidence="19">85 uM for L-arginine</KM>
        <KM evidence="19">90 uM for L-leucine</KM>
    </kinetics>
</comment>
<comment type="subunit">
    <text evidence="1 14 17 18">Disulfide-linked heterodimer composed of the catalytic light chain subunit SLC7A9 and the heavy chain subunit SLC3A1. The heterodimer is the minimal functional unit. Assembles in heterotetramers (dimers of heterodimers) and higher order oligomers; the oligomerization is mediated by SLC3A1 likely to prevent degradation and facilitate heteromer trafficking to the plasma membrane (PubMed:16825196, PubMed:32494597, PubMed:32817565). Interacts with CAV1 (By similarity).</text>
</comment>
<comment type="interaction">
    <interactant intactId="EBI-3936589">
        <id>P82251</id>
    </interactant>
    <interactant intactId="EBI-625022">
        <id>O43889-2</id>
        <label>CREB3</label>
    </interactant>
    <organismsDiffer>false</organismsDiffer>
    <experiments>3</experiments>
</comment>
<comment type="interaction">
    <interactant intactId="EBI-3936589">
        <id>P82251</id>
    </interactant>
    <interactant intactId="EBI-46442178">
        <id>Q07837</id>
        <label>SLC3A1</label>
    </interactant>
    <organismsDiffer>false</organismsDiffer>
    <experiments>2</experiments>
</comment>
<comment type="subcellular location">
    <subcellularLocation>
        <location evidence="7 13">Apical cell membrane</location>
        <topology evidence="13 22">Multi-pass membrane protein</topology>
    </subcellularLocation>
    <subcellularLocation>
        <location evidence="14 18">Cell membrane</location>
        <topology evidence="2">Multi-pass membrane protein</topology>
    </subcellularLocation>
</comment>
<comment type="tissue specificity">
    <text evidence="4 7">Expressed in the brush border membrane in the kidney (at protein level). Kidney, small intestine, liver and placenta.</text>
</comment>
<comment type="disease" evidence="4 6 8 9 10 11 12 13 15 16 17">
    <disease id="DI-01468">
        <name>Cystinuria</name>
        <acronym>CSNU</acronym>
        <description>An autosomal disorder characterized by impaired epithelial cell transport of cystine and dibasic amino acids (lysine, ornithine, and arginine) in the proximal renal tubule and gastrointestinal tract. The impaired renal reabsorption of cystine and its low solubility causes the formation of calculi in the urinary tract, resulting in obstructive uropathy, pyelonephritis, and, rarely, renal failure.</description>
        <dbReference type="MIM" id="220100"/>
    </disease>
    <text>The disease is caused by variants affecting the gene represented in this entry.</text>
</comment>
<comment type="similarity">
    <text evidence="21">Belongs to the amino acid-polyamine-organocation (APC) superfamily.</text>
</comment>
<accession>P82251</accession>
<accession>B2R9A6</accession>
<gene>
    <name evidence="20" type="primary">SLC7A9</name>
    <name type="synonym">BAT1</name>
</gene>
<sequence>MGDTGLRKRREDEKSIQSQEPKTTSLQKELGLISGISIIVGTIIGSGIFVSPKSVLSNTEAVGPCLIIWAACGVLATLGALCFAELGTMITKSGGEYPYLMEAYGPIPAYLFSWASLIVIKPTSFAIICLSFSEYVCAPFYVGCKPPQIVVKCLAAAAILFISTVNSLSVRLGSYVQNIFTAAKLVIVAIIIISGLVLLAQGNTKNFDNSFEGAQLSVGAISLAFYNGLWAYDGWNQLNYITEELRNPYRNLPLAIIIGIPLVTACYILMNVSYFTVMTATELLQSQAVAVTFGDRVLYPASWIVPLFVAFSTIGAANGTCFTAGRLIYVAGREGHMLKVLSYISVRRLTPAPAIIFYGIIATIYIIPGDINSLVNYFSFAAWLFYGLTILGLIVMRFTRKELERPIKVPVVIPVLMTLISVFLVLAPIISKPTWEYLYCVLFILSGLLFYFLFVHYKFGWAQKISKPITMHLQMLMEVVPPEEDPE</sequence>
<proteinExistence type="evidence at protein level"/>
<dbReference type="EMBL" id="AF141289">
    <property type="protein sequence ID" value="AAD55898.1"/>
    <property type="molecule type" value="mRNA"/>
</dbReference>
<dbReference type="EMBL" id="AJ249199">
    <property type="protein sequence ID" value="CAB54003.1"/>
    <property type="molecule type" value="mRNA"/>
</dbReference>
<dbReference type="EMBL" id="AB033548">
    <property type="protein sequence ID" value="BAB16840.1"/>
    <property type="molecule type" value="mRNA"/>
</dbReference>
<dbReference type="EMBL" id="AF421181">
    <property type="protein sequence ID" value="AAN40878.1"/>
    <property type="molecule type" value="Genomic_DNA"/>
</dbReference>
<dbReference type="EMBL" id="AF421170">
    <property type="protein sequence ID" value="AAN40878.1"/>
    <property type="status" value="JOINED"/>
    <property type="molecule type" value="Genomic_DNA"/>
</dbReference>
<dbReference type="EMBL" id="AF421171">
    <property type="protein sequence ID" value="AAN40878.1"/>
    <property type="status" value="JOINED"/>
    <property type="molecule type" value="Genomic_DNA"/>
</dbReference>
<dbReference type="EMBL" id="AF421172">
    <property type="protein sequence ID" value="AAN40878.1"/>
    <property type="status" value="JOINED"/>
    <property type="molecule type" value="Genomic_DNA"/>
</dbReference>
<dbReference type="EMBL" id="AF421173">
    <property type="protein sequence ID" value="AAN40878.1"/>
    <property type="status" value="JOINED"/>
    <property type="molecule type" value="Genomic_DNA"/>
</dbReference>
<dbReference type="EMBL" id="AF421174">
    <property type="protein sequence ID" value="AAN40878.1"/>
    <property type="status" value="JOINED"/>
    <property type="molecule type" value="Genomic_DNA"/>
</dbReference>
<dbReference type="EMBL" id="AF421175">
    <property type="protein sequence ID" value="AAN40878.1"/>
    <property type="status" value="JOINED"/>
    <property type="molecule type" value="Genomic_DNA"/>
</dbReference>
<dbReference type="EMBL" id="AF421176">
    <property type="protein sequence ID" value="AAN40878.1"/>
    <property type="status" value="JOINED"/>
    <property type="molecule type" value="Genomic_DNA"/>
</dbReference>
<dbReference type="EMBL" id="AF421177">
    <property type="protein sequence ID" value="AAN40878.1"/>
    <property type="status" value="JOINED"/>
    <property type="molecule type" value="Genomic_DNA"/>
</dbReference>
<dbReference type="EMBL" id="AF421178">
    <property type="protein sequence ID" value="AAN40878.1"/>
    <property type="status" value="JOINED"/>
    <property type="molecule type" value="Genomic_DNA"/>
</dbReference>
<dbReference type="EMBL" id="AF421179">
    <property type="protein sequence ID" value="AAN40878.1"/>
    <property type="status" value="JOINED"/>
    <property type="molecule type" value="Genomic_DNA"/>
</dbReference>
<dbReference type="EMBL" id="AF421180">
    <property type="protein sequence ID" value="AAN40878.1"/>
    <property type="status" value="JOINED"/>
    <property type="molecule type" value="Genomic_DNA"/>
</dbReference>
<dbReference type="EMBL" id="AK313708">
    <property type="protein sequence ID" value="BAG36453.1"/>
    <property type="molecule type" value="mRNA"/>
</dbReference>
<dbReference type="EMBL" id="BC017962">
    <property type="protein sequence ID" value="AAH17962.1"/>
    <property type="molecule type" value="mRNA"/>
</dbReference>
<dbReference type="CCDS" id="CCDS12425.1"/>
<dbReference type="RefSeq" id="NP_001119807.1">
    <property type="nucleotide sequence ID" value="NM_001126335.2"/>
</dbReference>
<dbReference type="RefSeq" id="NP_001229965.1">
    <property type="nucleotide sequence ID" value="NM_001243036.2"/>
</dbReference>
<dbReference type="RefSeq" id="NP_055085.1">
    <property type="nucleotide sequence ID" value="NM_014270.5"/>
</dbReference>
<dbReference type="RefSeq" id="XP_011524704.1">
    <property type="nucleotide sequence ID" value="XM_011526402.4"/>
</dbReference>
<dbReference type="RefSeq" id="XP_054175652.1">
    <property type="nucleotide sequence ID" value="XM_054319677.1"/>
</dbReference>
<dbReference type="PDB" id="6LI9">
    <property type="method" value="EM"/>
    <property type="resolution" value="2.30 A"/>
    <property type="chains" value="B/D=2-487"/>
</dbReference>
<dbReference type="PDB" id="6LID">
    <property type="method" value="EM"/>
    <property type="resolution" value="2.70 A"/>
    <property type="chains" value="B/D=2-487"/>
</dbReference>
<dbReference type="PDB" id="6YUP">
    <property type="method" value="EM"/>
    <property type="resolution" value="2.90 A"/>
    <property type="chains" value="D/E=1-487"/>
</dbReference>
<dbReference type="PDB" id="6YV1">
    <property type="method" value="EM"/>
    <property type="resolution" value="3.40 A"/>
    <property type="chains" value="A=1-487"/>
</dbReference>
<dbReference type="PDBsum" id="6LI9"/>
<dbReference type="PDBsum" id="6LID"/>
<dbReference type="PDBsum" id="6YUP"/>
<dbReference type="PDBsum" id="6YV1"/>
<dbReference type="EMDB" id="EMD-0903"/>
<dbReference type="EMDB" id="EMD-0904"/>
<dbReference type="EMDB" id="EMD-10933"/>
<dbReference type="EMDB" id="EMD-10940"/>
<dbReference type="SMR" id="P82251"/>
<dbReference type="BioGRID" id="116309">
    <property type="interactions" value="4"/>
</dbReference>
<dbReference type="ComplexPortal" id="CPX-8184">
    <property type="entry name" value="B(0,+)AT1-rBAT heteromeric amino acid transporter complex"/>
</dbReference>
<dbReference type="FunCoup" id="P82251">
    <property type="interactions" value="216"/>
</dbReference>
<dbReference type="IntAct" id="P82251">
    <property type="interactions" value="5"/>
</dbReference>
<dbReference type="MINT" id="P82251"/>
<dbReference type="STRING" id="9606.ENSP00000023064"/>
<dbReference type="DrugBank" id="DB00138">
    <property type="generic name" value="Cystine"/>
</dbReference>
<dbReference type="DrugBank" id="DB00130">
    <property type="generic name" value="L-Glutamine"/>
</dbReference>
<dbReference type="TCDB" id="2.A.3.8.19">
    <property type="family name" value="the amino acid-polyamine-organocation (apc) family"/>
</dbReference>
<dbReference type="iPTMnet" id="P82251"/>
<dbReference type="PhosphoSitePlus" id="P82251"/>
<dbReference type="SwissPalm" id="P82251"/>
<dbReference type="BioMuta" id="SLC7A9"/>
<dbReference type="DMDM" id="12585187"/>
<dbReference type="CPTAC" id="CPTAC-1190"/>
<dbReference type="CPTAC" id="CPTAC-1191"/>
<dbReference type="jPOST" id="P82251"/>
<dbReference type="MassIVE" id="P82251"/>
<dbReference type="PaxDb" id="9606-ENSP00000023064"/>
<dbReference type="PeptideAtlas" id="P82251"/>
<dbReference type="ProteomicsDB" id="57704"/>
<dbReference type="Antibodypedia" id="28931">
    <property type="antibodies" value="85 antibodies from 20 providers"/>
</dbReference>
<dbReference type="DNASU" id="11136"/>
<dbReference type="Ensembl" id="ENST00000023064.9">
    <property type="protein sequence ID" value="ENSP00000023064.3"/>
    <property type="gene ID" value="ENSG00000021488.13"/>
</dbReference>
<dbReference type="Ensembl" id="ENST00000587772.1">
    <property type="protein sequence ID" value="ENSP00000468439.1"/>
    <property type="gene ID" value="ENSG00000021488.13"/>
</dbReference>
<dbReference type="Ensembl" id="ENST00000590341.5">
    <property type="protein sequence ID" value="ENSP00000464822.1"/>
    <property type="gene ID" value="ENSG00000021488.13"/>
</dbReference>
<dbReference type="GeneID" id="11136"/>
<dbReference type="KEGG" id="hsa:11136"/>
<dbReference type="MANE-Select" id="ENST00000023064.9">
    <property type="protein sequence ID" value="ENSP00000023064.3"/>
    <property type="RefSeq nucleotide sequence ID" value="NM_014270.5"/>
    <property type="RefSeq protein sequence ID" value="NP_055085.1"/>
</dbReference>
<dbReference type="UCSC" id="uc002ntu.6">
    <property type="organism name" value="human"/>
</dbReference>
<dbReference type="AGR" id="HGNC:11067"/>
<dbReference type="CTD" id="11136"/>
<dbReference type="DisGeNET" id="11136"/>
<dbReference type="GeneCards" id="SLC7A9"/>
<dbReference type="HGNC" id="HGNC:11067">
    <property type="gene designation" value="SLC7A9"/>
</dbReference>
<dbReference type="HPA" id="ENSG00000021488">
    <property type="expression patterns" value="Group enriched (intestine, kidney)"/>
</dbReference>
<dbReference type="MalaCards" id="SLC7A9"/>
<dbReference type="MIM" id="220100">
    <property type="type" value="phenotype"/>
</dbReference>
<dbReference type="MIM" id="604144">
    <property type="type" value="gene"/>
</dbReference>
<dbReference type="neXtProt" id="NX_P82251"/>
<dbReference type="OpenTargets" id="ENSG00000021488"/>
<dbReference type="Orphanet" id="93613">
    <property type="disease" value="Cystinuria type B"/>
</dbReference>
<dbReference type="PharmGKB" id="PA35927"/>
<dbReference type="VEuPathDB" id="HostDB:ENSG00000021488"/>
<dbReference type="eggNOG" id="KOG1287">
    <property type="taxonomic scope" value="Eukaryota"/>
</dbReference>
<dbReference type="GeneTree" id="ENSGT00940000156370"/>
<dbReference type="HOGENOM" id="CLU_007946_3_0_1"/>
<dbReference type="InParanoid" id="P82251"/>
<dbReference type="OMA" id="TYWVISF"/>
<dbReference type="OrthoDB" id="5982228at2759"/>
<dbReference type="PAN-GO" id="P82251">
    <property type="GO annotations" value="4 GO annotations based on evolutionary models"/>
</dbReference>
<dbReference type="PhylomeDB" id="P82251"/>
<dbReference type="PathwayCommons" id="P82251"/>
<dbReference type="Reactome" id="R-HSA-210991">
    <property type="pathway name" value="Basigin interactions"/>
</dbReference>
<dbReference type="Reactome" id="R-HSA-352230">
    <property type="pathway name" value="Amino acid transport across the plasma membrane"/>
</dbReference>
<dbReference type="Reactome" id="R-HSA-5619113">
    <property type="pathway name" value="Defective SLC3A1 causes cystinuria (CSNU)"/>
</dbReference>
<dbReference type="Reactome" id="R-HSA-5660883">
    <property type="pathway name" value="Defective SLC7A9 causes cystinuria (CSNU)"/>
</dbReference>
<dbReference type="SignaLink" id="P82251"/>
<dbReference type="BioGRID-ORCS" id="11136">
    <property type="hits" value="14 hits in 1152 CRISPR screens"/>
</dbReference>
<dbReference type="ChiTaRS" id="SLC7A9">
    <property type="organism name" value="human"/>
</dbReference>
<dbReference type="GenomeRNAi" id="11136"/>
<dbReference type="Pharos" id="P82251">
    <property type="development level" value="Tbio"/>
</dbReference>
<dbReference type="PRO" id="PR:P82251"/>
<dbReference type="Proteomes" id="UP000005640">
    <property type="component" value="Chromosome 19"/>
</dbReference>
<dbReference type="RNAct" id="P82251">
    <property type="molecule type" value="protein"/>
</dbReference>
<dbReference type="Bgee" id="ENSG00000021488">
    <property type="expression patterns" value="Expressed in ileal mucosa and 107 other cell types or tissues"/>
</dbReference>
<dbReference type="ExpressionAtlas" id="P82251">
    <property type="expression patterns" value="baseline and differential"/>
</dbReference>
<dbReference type="GO" id="GO:0016324">
    <property type="term" value="C:apical plasma membrane"/>
    <property type="evidence" value="ECO:0000314"/>
    <property type="project" value="UniProtKB"/>
</dbReference>
<dbReference type="GO" id="GO:0031526">
    <property type="term" value="C:brush border membrane"/>
    <property type="evidence" value="ECO:0000314"/>
    <property type="project" value="UniProtKB"/>
</dbReference>
<dbReference type="GO" id="GO:0005886">
    <property type="term" value="C:plasma membrane"/>
    <property type="evidence" value="ECO:0000250"/>
    <property type="project" value="UniProtKB"/>
</dbReference>
<dbReference type="GO" id="GO:0015297">
    <property type="term" value="F:antiporter activity"/>
    <property type="evidence" value="ECO:0000314"/>
    <property type="project" value="UniProtKB"/>
</dbReference>
<dbReference type="GO" id="GO:0180009">
    <property type="term" value="F:broad specificity neutral L-amino acid:basic L-amino acid antiporter activity"/>
    <property type="evidence" value="ECO:0000314"/>
    <property type="project" value="UniProtKB"/>
</dbReference>
<dbReference type="GO" id="GO:0015184">
    <property type="term" value="F:L-cystine transmembrane transporter activity"/>
    <property type="evidence" value="ECO:0000315"/>
    <property type="project" value="UniProtKB"/>
</dbReference>
<dbReference type="GO" id="GO:0015175">
    <property type="term" value="F:neutral L-amino acid transmembrane transporter activity"/>
    <property type="evidence" value="ECO:0000315"/>
    <property type="project" value="UniProtKB"/>
</dbReference>
<dbReference type="GO" id="GO:0042605">
    <property type="term" value="F:peptide antigen binding"/>
    <property type="evidence" value="ECO:0000250"/>
    <property type="project" value="UniProtKB"/>
</dbReference>
<dbReference type="GO" id="GO:0046982">
    <property type="term" value="F:protein heterodimerization activity"/>
    <property type="evidence" value="ECO:0000314"/>
    <property type="project" value="UniProtKB"/>
</dbReference>
<dbReference type="GO" id="GO:0003333">
    <property type="term" value="P:amino acid transmembrane transport"/>
    <property type="evidence" value="ECO:0000318"/>
    <property type="project" value="GO_Central"/>
</dbReference>
<dbReference type="GO" id="GO:0015811">
    <property type="term" value="P:L-cystine transport"/>
    <property type="evidence" value="ECO:0000315"/>
    <property type="project" value="UniProtKB"/>
</dbReference>
<dbReference type="GO" id="GO:0015804">
    <property type="term" value="P:neutral amino acid transport"/>
    <property type="evidence" value="ECO:0000315"/>
    <property type="project" value="UniProtKB"/>
</dbReference>
<dbReference type="GO" id="GO:0065003">
    <property type="term" value="P:protein-containing complex assembly"/>
    <property type="evidence" value="ECO:0000304"/>
    <property type="project" value="ProtInc"/>
</dbReference>
<dbReference type="FunFam" id="1.20.1740.10:FF:000015">
    <property type="entry name" value="B(0,+)-type amino acid transporter 1"/>
    <property type="match status" value="1"/>
</dbReference>
<dbReference type="Gene3D" id="1.20.1740.10">
    <property type="entry name" value="Amino acid/polyamine transporter I"/>
    <property type="match status" value="1"/>
</dbReference>
<dbReference type="InterPro" id="IPR002293">
    <property type="entry name" value="AA/rel_permease1"/>
</dbReference>
<dbReference type="InterPro" id="IPR050598">
    <property type="entry name" value="AminoAcid_Transporter"/>
</dbReference>
<dbReference type="PANTHER" id="PTHR11785">
    <property type="entry name" value="AMINO ACID TRANSPORTER"/>
    <property type="match status" value="1"/>
</dbReference>
<dbReference type="PANTHER" id="PTHR11785:SF354">
    <property type="entry name" value="B(0,+)-TYPE AMINO ACID TRANSPORTER 1"/>
    <property type="match status" value="1"/>
</dbReference>
<dbReference type="Pfam" id="PF13520">
    <property type="entry name" value="AA_permease_2"/>
    <property type="match status" value="1"/>
</dbReference>
<dbReference type="PIRSF" id="PIRSF006060">
    <property type="entry name" value="AA_transporter"/>
    <property type="match status" value="1"/>
</dbReference>
<name>BAT1_HUMAN</name>
<feature type="chain" id="PRO_0000054258" description="b(0,+)-type amino acid transporter 1">
    <location>
        <begin position="1"/>
        <end position="487"/>
    </location>
</feature>
<feature type="topological domain" description="Cytoplasmic" evidence="21">
    <location>
        <begin position="1"/>
        <end position="31"/>
    </location>
</feature>
<feature type="transmembrane region" description="Helical" evidence="17 25">
    <location>
        <begin position="32"/>
        <end position="55"/>
    </location>
</feature>
<feature type="topological domain" description="Extracellular" evidence="21">
    <location>
        <begin position="56"/>
        <end position="62"/>
    </location>
</feature>
<feature type="transmembrane region" description="Helical" evidence="17 25">
    <location>
        <begin position="63"/>
        <end position="84"/>
    </location>
</feature>
<feature type="topological domain" description="Cytoplasmic" evidence="21">
    <location>
        <begin position="85"/>
        <end position="110"/>
    </location>
</feature>
<feature type="transmembrane region" description="Helical" evidence="17 25">
    <location>
        <begin position="111"/>
        <end position="137"/>
    </location>
</feature>
<feature type="topological domain" description="Extracellular" evidence="21">
    <location>
        <begin position="138"/>
        <end position="147"/>
    </location>
</feature>
<feature type="transmembrane region" description="Helical" evidence="17 25">
    <location>
        <begin position="148"/>
        <end position="169"/>
    </location>
</feature>
<feature type="transmembrane region" description="Helical" evidence="17 25">
    <location>
        <begin position="170"/>
        <end position="193"/>
    </location>
</feature>
<feature type="topological domain" description="Extracellular" evidence="21">
    <location>
        <begin position="194"/>
        <end position="217"/>
    </location>
</feature>
<feature type="transmembrane region" description="Helical" evidence="17 25">
    <location>
        <begin position="218"/>
        <end position="238"/>
    </location>
</feature>
<feature type="topological domain" description="Cytoplasmic" evidence="21">
    <location>
        <begin position="239"/>
        <end position="251"/>
    </location>
</feature>
<feature type="transmembrane region" description="Helical" evidence="17 25">
    <location>
        <begin position="252"/>
        <end position="274"/>
    </location>
</feature>
<feature type="topological domain" description="Extracellular" evidence="21">
    <location>
        <begin position="275"/>
        <end position="302"/>
    </location>
</feature>
<feature type="transmembrane region" description="Helical" evidence="17 25">
    <location>
        <begin position="303"/>
        <end position="325"/>
    </location>
</feature>
<feature type="topological domain" description="Cytoplasmic" evidence="21">
    <location>
        <begin position="326"/>
        <end position="351"/>
    </location>
</feature>
<feature type="transmembrane region" description="Helical" evidence="17 25">
    <location>
        <begin position="352"/>
        <end position="370"/>
    </location>
</feature>
<feature type="transmembrane region" description="Helical" evidence="17 25">
    <location>
        <begin position="371"/>
        <end position="391"/>
    </location>
</feature>
<feature type="topological domain" description="Cytoplasmic" evidence="21">
    <location>
        <begin position="392"/>
        <end position="410"/>
    </location>
</feature>
<feature type="transmembrane region" description="Helical" evidence="17 25">
    <location>
        <begin position="411"/>
        <end position="431"/>
    </location>
</feature>
<feature type="topological domain" description="Extracellular" evidence="21">
    <location>
        <begin position="432"/>
        <end position="434"/>
    </location>
</feature>
<feature type="transmembrane region" description="Helical" evidence="17 25">
    <location>
        <begin position="435"/>
        <end position="450"/>
    </location>
</feature>
<feature type="topological domain" description="Cytoplasmic" evidence="21">
    <location>
        <begin position="451"/>
        <end position="487"/>
    </location>
</feature>
<feature type="region of interest" description="Disordered" evidence="3">
    <location>
        <begin position="1"/>
        <end position="22"/>
    </location>
</feature>
<feature type="compositionally biased region" description="Basic and acidic residues" evidence="3">
    <location>
        <begin position="1"/>
        <end position="15"/>
    </location>
</feature>
<feature type="binding site" evidence="17 25">
    <location>
        <begin position="43"/>
        <end position="47"/>
    </location>
    <ligand>
        <name>L-arginine</name>
        <dbReference type="ChEBI" id="CHEBI:32682"/>
        <note>substrate</note>
    </ligand>
</feature>
<feature type="binding site" evidence="17 25">
    <location>
        <position position="233"/>
    </location>
    <ligand>
        <name>L-arginine</name>
        <dbReference type="ChEBI" id="CHEBI:32682"/>
        <note>substrate</note>
    </ligand>
</feature>
<feature type="modified residue" description="Phosphoserine" evidence="1">
    <location>
        <position position="18"/>
    </location>
</feature>
<feature type="disulfide bond" description="Interchain (with C-114 in SLC3A1)" evidence="17 25 26">
    <location>
        <position position="144"/>
    </location>
</feature>
<feature type="sequence variant" id="VAR_018997" description="In CSNU." evidence="6">
    <location>
        <position position="10"/>
    </location>
</feature>
<feature type="sequence variant" id="VAR_072308" description="In CSNU; uncertain significance." evidence="15">
    <original>V</original>
    <variation>M</variation>
    <location>
        <position position="40"/>
    </location>
</feature>
<feature type="sequence variant" id="VAR_014363" description="In CSNU; type I; dbSNP:rs121908485." evidence="9">
    <original>I</original>
    <variation>T</variation>
    <location>
        <position position="44"/>
    </location>
</feature>
<feature type="sequence variant" id="VAR_072309" description="In CSNU; uncertain significance." evidence="15">
    <original>S</original>
    <variation>F</variation>
    <location>
        <position position="51"/>
    </location>
</feature>
<feature type="sequence variant" id="VAR_018998" description="In CSNU; impairs protein stability and dimer formation; dbSNP:rs1198613438." evidence="6 17">
    <original>P</original>
    <variation>L</variation>
    <location>
        <position position="52"/>
    </location>
</feature>
<feature type="sequence variant" id="VAR_072310" description="In CSNU; dbSNP:rs964489627." evidence="11">
    <original>V</original>
    <variation>M</variation>
    <location>
        <position position="62"/>
    </location>
</feature>
<feature type="sequence variant" id="VAR_018999" description="In CSNU; dbSNP:rs1395997436." evidence="6">
    <original>G</original>
    <variation>R</variation>
    <location>
        <position position="63"/>
    </location>
</feature>
<feature type="sequence variant" id="VAR_019000" description="In CSNU." evidence="6">
    <original>W</original>
    <variation>L</variation>
    <location>
        <position position="69"/>
    </location>
</feature>
<feature type="sequence variant" id="VAR_019001" description="In CSNU; partial loss of amino acid transport activity; dbSNP:rs769448665." evidence="6 17">
    <original>A</original>
    <variation>V</variation>
    <location>
        <position position="70"/>
    </location>
</feature>
<feature type="sequence variant" id="VAR_072311" description="In CSNU; uncertain significance." evidence="15">
    <original>Y</original>
    <variation>H</variation>
    <location>
        <position position="99"/>
    </location>
</feature>
<feature type="sequence variant" id="VAR_072312" description="In CSNU." evidence="16">
    <original>G</original>
    <variation>E</variation>
    <location>
        <position position="105"/>
    </location>
</feature>
<feature type="sequence variant" id="VAR_010256" description="In CSNU; type III; severe loss of amino acid transport activity; dbSNP:rs121908480." evidence="4 6 8 12 16">
    <original>G</original>
    <variation>R</variation>
    <location>
        <position position="105"/>
    </location>
</feature>
<feature type="sequence variant" id="VAR_072313" description="In CSNU; uncertain significance." evidence="15">
    <original>W</original>
    <variation>R</variation>
    <location>
        <position position="114"/>
    </location>
</feature>
<feature type="sequence variant" id="VAR_072314" description="In CSNU; uncertain significance." evidence="15">
    <original>I</original>
    <variation>L</variation>
    <location>
        <position position="120"/>
    </location>
</feature>
<feature type="sequence variant" id="VAR_019002" description="In CSNU; partial loss of amino acid transport activity; dbSNP:rs79987078." evidence="6 12 16 17">
    <original>T</original>
    <variation>M</variation>
    <location>
        <position position="123"/>
    </location>
</feature>
<feature type="sequence variant" id="VAR_019003" description="In CSNU; dbSNP:rs372306844." evidence="6">
    <original>A</original>
    <variation>T</variation>
    <location>
        <position position="126"/>
    </location>
</feature>
<feature type="sequence variant" id="VAR_048153" description="No effect on amino acid transport activity; dbSNP:rs12150889." evidence="13">
    <original>V</original>
    <variation>A</variation>
    <location>
        <position position="142"/>
    </location>
</feature>
<feature type="sequence variant" id="VAR_019004" description="In CSNU." evidence="6">
    <original>A</original>
    <variation>AA</variation>
    <location>
        <position position="158"/>
    </location>
</feature>
<feature type="sequence variant" id="VAR_010257" description="In CSNU; type III; severe loss of amino acid transport activity; dbSNP:rs121908479." evidence="4 6 17">
    <original>V</original>
    <variation>M</variation>
    <location>
        <position position="170"/>
    </location>
</feature>
<feature type="sequence variant" id="VAR_010258" description="In CSNU; type III; partial loss of amino acid transport activity; dbSNP:rs79389353." evidence="4 6 10 16 17">
    <original>A</original>
    <variation>T</variation>
    <location>
        <position position="182"/>
    </location>
</feature>
<feature type="sequence variant" id="VAR_019005" description="In CSNU; dbSNP:rs368441237." evidence="6">
    <original>I</original>
    <variation>F</variation>
    <location>
        <position position="187"/>
    </location>
</feature>
<feature type="sequence variant" id="VAR_072315" description="In CSNU; dbSNP:rs531029519." evidence="11">
    <original>V</original>
    <variation>M</variation>
    <location>
        <position position="188"/>
    </location>
</feature>
<feature type="sequence variant" id="VAR_019006" description="In CSNU." evidence="6">
    <original>I</original>
    <variation>II</variation>
    <location>
        <position position="193"/>
    </location>
</feature>
<feature type="sequence variant" id="VAR_010259" description="In CSNU; type III; decreased amino acid transport activity; dbSNP:rs121908482." evidence="4 6 13">
    <original>G</original>
    <variation>R</variation>
    <location>
        <position position="195"/>
    </location>
</feature>
<feature type="sequence variant" id="VAR_019007" description="Slightly decreased amino acid transport activity; dbSNP:rs1007160." evidence="9 13">
    <original>L</original>
    <variation>M</variation>
    <location>
        <position position="223"/>
    </location>
</feature>
<feature type="sequence variant" id="VAR_022603" description="In CSNU; non-classic type I; dbSNP:rs140873167." evidence="8">
    <original>A</original>
    <variation>V</variation>
    <location>
        <position position="224"/>
    </location>
</feature>
<feature type="sequence variant" id="VAR_072316" description="In CSNU; decreased amino acid transport activity." evidence="13">
    <original>N</original>
    <variation>D</variation>
    <location>
        <position position="227"/>
    </location>
</feature>
<feature type="sequence variant" id="VAR_019008" description="In CSNU; complete loss of amino acid transport activity." evidence="6 17">
    <original>W</original>
    <variation>R</variation>
    <location>
        <position position="230"/>
    </location>
</feature>
<feature type="sequence variant" id="VAR_072317" description="In CSNU; dbSNP:rs121908487." evidence="11">
    <original>Y</original>
    <variation>C</variation>
    <location>
        <position position="232"/>
    </location>
</feature>
<feature type="sequence variant" id="VAR_019009" description="In CSNU; dbSNP:rs777371504." evidence="6">
    <original>I</original>
    <variation>T</variation>
    <location>
        <position position="241"/>
    </location>
</feature>
<feature type="sequence variant" id="VAR_019010" description="In CSNU." evidence="6">
    <location>
        <position position="244"/>
    </location>
</feature>
<feature type="sequence variant" id="VAR_072318" description="In CSNU; dbSNP:rs766529640." evidence="16">
    <original>R</original>
    <variation>K</variation>
    <location>
        <position position="250"/>
    </location>
</feature>
<feature type="sequence variant" id="VAR_010260" description="In CSNU; type III; impairs protein stability and dimer formation; dbSNP:rs121908483." evidence="4 6 17">
    <original>G</original>
    <variation>R</variation>
    <location>
        <position position="259"/>
    </location>
</feature>
<feature type="sequence variant" id="VAR_014364" description="In CSNU; types I and III; dbSNP:rs121908486." evidence="9 10">
    <original>P</original>
    <variation>L</variation>
    <location>
        <position position="261"/>
    </location>
</feature>
<feature type="sequence variant" id="VAR_072319" description="In CSNU; dbSNP:rs1357600282." evidence="11">
    <original>L</original>
    <variation>F</variation>
    <location>
        <position position="283"/>
    </location>
</feature>
<feature type="sequence variant" id="VAR_072320" description="In CSNU; uncertain significance; dbSNP:rs755135545." evidence="15">
    <original>S</original>
    <variation>F</variation>
    <location>
        <position position="286"/>
    </location>
</feature>
<feature type="sequence variant" id="VAR_072321" description="In CSNU." evidence="11">
    <original>A</original>
    <variation>V</variation>
    <location>
        <position position="316"/>
    </location>
</feature>
<feature type="sequence variant" id="VAR_072322" description="In CSNU." evidence="12">
    <original>G</original>
    <variation>R</variation>
    <location>
        <position position="319"/>
    </location>
</feature>
<feature type="sequence variant" id="VAR_072323" description="In CSNU; uncertain significance." evidence="15">
    <original>A</original>
    <variation>E</variation>
    <location>
        <position position="324"/>
    </location>
</feature>
<feature type="sequence variant" id="VAR_015885" description="In CSNU; type III; dbSNP:rs201618022." evidence="10">
    <original>V</original>
    <variation>M</variation>
    <location>
        <position position="330"/>
    </location>
</feature>
<feature type="sequence variant" id="VAR_022604" description="In CSNU; non-classic type I; dbSNP:rs768466784." evidence="8">
    <original>A</original>
    <variation>V</variation>
    <location>
        <position position="331"/>
    </location>
</feature>
<feature type="sequence variant" id="VAR_072324" description="In CSNU; decreased amino acid transport activity; dbSNP:rs769576205." evidence="13">
    <original>R</original>
    <variation>Q</variation>
    <location>
        <position position="333"/>
    </location>
</feature>
<feature type="sequence variant" id="VAR_019011" description="In CSNU; severe loss of amino acid transport activity; dbSNP:rs121908484." evidence="6 12 17">
    <original>R</original>
    <variation>W</variation>
    <location>
        <position position="333"/>
    </location>
</feature>
<feature type="sequence variant" id="VAR_014365" description="In CSNU; type III; severe loss of amino acid transport activity; dbSNP:rs939028046." evidence="6 9 17">
    <original>A</original>
    <variation>T</variation>
    <location>
        <position position="354"/>
    </location>
</feature>
<feature type="sequence variant" id="VAR_019012" description="In CSNU; dbSNP:rs142270619." evidence="6">
    <original>S</original>
    <variation>R</variation>
    <location>
        <position position="379"/>
    </location>
</feature>
<feature type="sequence variant" id="VAR_019013" description="In CSNU; severe loss of amino acid transport activity; dbSNP:rs774878350." evidence="6 17">
    <original>A</original>
    <variation>T</variation>
    <location>
        <position position="382"/>
    </location>
</feature>
<feature type="sequence variant" id="VAR_072325" description="In CSNU; uncertain significance; dbSNP:rs760264924." evidence="15">
    <original>K</original>
    <variation>E</variation>
    <location>
        <position position="401"/>
    </location>
</feature>
<feature type="sequence variant" id="VAR_072326" description="In CSNU; uncertain significance." evidence="15">
    <original>L</original>
    <variation>P</variation>
    <location>
        <position position="426"/>
    </location>
</feature>
<feature type="sequence variant" id="VAR_072327" description="In CSNU; severe loss of amino acid transport activity; no effect on localization to the apical membrane; dbSNP:rs146815072." evidence="13 17">
    <original>P</original>
    <variation>L</variation>
    <location>
        <position position="482"/>
    </location>
</feature>
<feature type="mutagenesis site" description="Abolishes amino acid transport activity." evidence="17">
    <original>W</original>
    <variation>A</variation>
    <location>
        <position position="230"/>
    </location>
</feature>
<feature type="mutagenesis site" description="Complete loss of amino acid transport activity." evidence="17">
    <original>D</original>
    <variation>A</variation>
    <location>
        <position position="233"/>
    </location>
</feature>
<feature type="mutagenesis site" description="Complete loss of amino acid transport activity." evidence="17">
    <original>W</original>
    <variation>A</variation>
    <location>
        <position position="235"/>
    </location>
</feature>
<feature type="mutagenesis site" description="Reduces amino acid transport activity." evidence="17">
    <original>Q</original>
    <variation>A</variation>
    <location>
        <position position="237"/>
    </location>
</feature>
<feature type="mutagenesis site" description="Does not affect amino acid transport activity." evidence="14">
    <original>C</original>
    <variation>S</variation>
    <location>
        <position position="321"/>
    </location>
</feature>
<feature type="mutagenesis site" description="Markedly reduces amino acid transport activity." evidence="17">
    <original>S</original>
    <variation>A</variation>
    <location>
        <position position="379"/>
    </location>
</feature>
<feature type="mutagenesis site" description="Complete loss of amino acid transport activity." evidence="17">
    <original>W</original>
    <variation>A</variation>
    <location>
        <position position="383"/>
    </location>
</feature>
<feature type="mutagenesis site" description="Loss of amino acid transport activity." evidence="17">
    <original>Y</original>
    <variation>A</variation>
    <location>
        <position position="386"/>
    </location>
</feature>
<feature type="mutagenesis site" description="No effect on amino acid transport activity." evidence="13">
    <original>P</original>
    <variation>A</variation>
    <variation>G</variation>
    <variation>S</variation>
    <variation>V</variation>
    <location>
        <position position="482"/>
    </location>
</feature>
<feature type="mutagenesis site" description="Decreased amino acid transport activity." evidence="13">
    <original>P</original>
    <variation>F</variation>
    <variation>I</variation>
    <variation>M</variation>
    <variation>W</variation>
    <location>
        <position position="482"/>
    </location>
</feature>
<feature type="sequence conflict" description="In Ref. 2; CAB54003." evidence="21" ref="2">
    <original>P</original>
    <variation>S</variation>
    <location>
        <position position="52"/>
    </location>
</feature>
<feature type="helix" evidence="27">
    <location>
        <begin position="33"/>
        <end position="43"/>
    </location>
</feature>
<feature type="strand" evidence="27">
    <location>
        <begin position="45"/>
        <end position="47"/>
    </location>
</feature>
<feature type="turn" evidence="27">
    <location>
        <begin position="48"/>
        <end position="51"/>
    </location>
</feature>
<feature type="helix" evidence="27">
    <location>
        <begin position="52"/>
        <end position="58"/>
    </location>
</feature>
<feature type="helix" evidence="27">
    <location>
        <begin position="62"/>
        <end position="89"/>
    </location>
</feature>
<feature type="strand" evidence="27">
    <location>
        <begin position="93"/>
        <end position="96"/>
    </location>
</feature>
<feature type="helix" evidence="27">
    <location>
        <begin position="97"/>
        <end position="103"/>
    </location>
</feature>
<feature type="helix" evidence="27">
    <location>
        <begin position="106"/>
        <end position="118"/>
    </location>
</feature>
<feature type="helix" evidence="27">
    <location>
        <begin position="120"/>
        <end position="137"/>
    </location>
</feature>
<feature type="helix" evidence="27">
    <location>
        <begin position="138"/>
        <end position="140"/>
    </location>
</feature>
<feature type="strand" evidence="29">
    <location>
        <begin position="141"/>
        <end position="144"/>
    </location>
</feature>
<feature type="helix" evidence="27">
    <location>
        <begin position="148"/>
        <end position="165"/>
    </location>
</feature>
<feature type="turn" evidence="27">
    <location>
        <begin position="166"/>
        <end position="168"/>
    </location>
</feature>
<feature type="helix" evidence="27">
    <location>
        <begin position="172"/>
        <end position="175"/>
    </location>
</feature>
<feature type="helix" evidence="27">
    <location>
        <begin position="177"/>
        <end position="200"/>
    </location>
</feature>
<feature type="helix" evidence="27">
    <location>
        <begin position="205"/>
        <end position="207"/>
    </location>
</feature>
<feature type="turn" evidence="27">
    <location>
        <begin position="208"/>
        <end position="211"/>
    </location>
</feature>
<feature type="helix" evidence="27">
    <location>
        <begin position="220"/>
        <end position="230"/>
    </location>
</feature>
<feature type="turn" evidence="27">
    <location>
        <begin position="231"/>
        <end position="234"/>
    </location>
</feature>
<feature type="helix" evidence="27">
    <location>
        <begin position="236"/>
        <end position="238"/>
    </location>
</feature>
<feature type="turn" evidence="28">
    <location>
        <begin position="239"/>
        <end position="241"/>
    </location>
</feature>
<feature type="strand" evidence="28">
    <location>
        <begin position="244"/>
        <end position="247"/>
    </location>
</feature>
<feature type="turn" evidence="27">
    <location>
        <begin position="248"/>
        <end position="250"/>
    </location>
</feature>
<feature type="helix" evidence="27">
    <location>
        <begin position="251"/>
        <end position="274"/>
    </location>
</feature>
<feature type="turn" evidence="27">
    <location>
        <begin position="275"/>
        <end position="277"/>
    </location>
</feature>
<feature type="helix" evidence="27">
    <location>
        <begin position="280"/>
        <end position="284"/>
    </location>
</feature>
<feature type="helix" evidence="27">
    <location>
        <begin position="289"/>
        <end position="296"/>
    </location>
</feature>
<feature type="turn" evidence="27">
    <location>
        <begin position="300"/>
        <end position="303"/>
    </location>
</feature>
<feature type="helix" evidence="27">
    <location>
        <begin position="304"/>
        <end position="320"/>
    </location>
</feature>
<feature type="helix" evidence="27">
    <location>
        <begin position="326"/>
        <end position="333"/>
    </location>
</feature>
<feature type="strand" evidence="27">
    <location>
        <begin position="344"/>
        <end position="348"/>
    </location>
</feature>
<feature type="helix" evidence="27">
    <location>
        <begin position="352"/>
        <end position="365"/>
    </location>
</feature>
<feature type="turn" evidence="27">
    <location>
        <begin position="366"/>
        <end position="368"/>
    </location>
</feature>
<feature type="turn" evidence="27">
    <location>
        <begin position="371"/>
        <end position="373"/>
    </location>
</feature>
<feature type="helix" evidence="27">
    <location>
        <begin position="374"/>
        <end position="395"/>
    </location>
</feature>
<feature type="turn" evidence="27">
    <location>
        <begin position="396"/>
        <end position="398"/>
    </location>
</feature>
<feature type="helix" evidence="27">
    <location>
        <begin position="412"/>
        <end position="431"/>
    </location>
</feature>
<feature type="helix" evidence="27">
    <location>
        <begin position="436"/>
        <end position="454"/>
    </location>
</feature>
<feature type="turn" evidence="28">
    <location>
        <begin position="455"/>
        <end position="457"/>
    </location>
</feature>
<feature type="turn" evidence="27">
    <location>
        <begin position="460"/>
        <end position="462"/>
    </location>
</feature>
<feature type="helix" evidence="27">
    <location>
        <begin position="463"/>
        <end position="477"/>
    </location>
</feature>
<evidence type="ECO:0000250" key="1">
    <source>
        <dbReference type="UniProtKB" id="P82252"/>
    </source>
</evidence>
<evidence type="ECO:0000255" key="2"/>
<evidence type="ECO:0000256" key="3">
    <source>
        <dbReference type="SAM" id="MobiDB-lite"/>
    </source>
</evidence>
<evidence type="ECO:0000269" key="4">
    <source>
    </source>
</evidence>
<evidence type="ECO:0000269" key="5">
    <source>
    </source>
</evidence>
<evidence type="ECO:0000269" key="6">
    <source>
    </source>
</evidence>
<evidence type="ECO:0000269" key="7">
    <source>
    </source>
</evidence>
<evidence type="ECO:0000269" key="8">
    <source>
    </source>
</evidence>
<evidence type="ECO:0000269" key="9">
    <source>
    </source>
</evidence>
<evidence type="ECO:0000269" key="10">
    <source>
    </source>
</evidence>
<evidence type="ECO:0000269" key="11">
    <source>
    </source>
</evidence>
<evidence type="ECO:0000269" key="12">
    <source>
    </source>
</evidence>
<evidence type="ECO:0000269" key="13">
    <source>
    </source>
</evidence>
<evidence type="ECO:0000269" key="14">
    <source>
    </source>
</evidence>
<evidence type="ECO:0000269" key="15">
    <source>
    </source>
</evidence>
<evidence type="ECO:0000269" key="16">
    <source>
    </source>
</evidence>
<evidence type="ECO:0000269" key="17">
    <source>
    </source>
</evidence>
<evidence type="ECO:0000269" key="18">
    <source>
    </source>
</evidence>
<evidence type="ECO:0000269" key="19">
    <source>
    </source>
</evidence>
<evidence type="ECO:0000303" key="20">
    <source>
    </source>
</evidence>
<evidence type="ECO:0000305" key="21"/>
<evidence type="ECO:0000305" key="22">
    <source>
    </source>
</evidence>
<evidence type="ECO:0000305" key="23">
    <source>
    </source>
</evidence>
<evidence type="ECO:0000305" key="24">
    <source>
    </source>
</evidence>
<evidence type="ECO:0007744" key="25">
    <source>
        <dbReference type="PDB" id="6LI9"/>
    </source>
</evidence>
<evidence type="ECO:0007744" key="26">
    <source>
        <dbReference type="PDB" id="6LID"/>
    </source>
</evidence>
<evidence type="ECO:0007829" key="27">
    <source>
        <dbReference type="PDB" id="6LI9"/>
    </source>
</evidence>
<evidence type="ECO:0007829" key="28">
    <source>
        <dbReference type="PDB" id="6LID"/>
    </source>
</evidence>
<evidence type="ECO:0007829" key="29">
    <source>
        <dbReference type="PDB" id="6YUP"/>
    </source>
</evidence>
<protein>
    <recommendedName>
        <fullName>b(0,+)-type amino acid transporter 1</fullName>
        <shortName>b(0,+)AT1</shortName>
    </recommendedName>
    <alternativeName>
        <fullName>Glycoprotein-associated amino acid transporter b0,+AT1</fullName>
    </alternativeName>
    <alternativeName>
        <fullName>Solute carrier family 7 member 9</fullName>
    </alternativeName>
</protein>